<organism>
    <name type="scientific">Mus musculus</name>
    <name type="common">Mouse</name>
    <dbReference type="NCBI Taxonomy" id="10090"/>
    <lineage>
        <taxon>Eukaryota</taxon>
        <taxon>Metazoa</taxon>
        <taxon>Chordata</taxon>
        <taxon>Craniata</taxon>
        <taxon>Vertebrata</taxon>
        <taxon>Euteleostomi</taxon>
        <taxon>Mammalia</taxon>
        <taxon>Eutheria</taxon>
        <taxon>Euarchontoglires</taxon>
        <taxon>Glires</taxon>
        <taxon>Rodentia</taxon>
        <taxon>Myomorpha</taxon>
        <taxon>Muroidea</taxon>
        <taxon>Muridae</taxon>
        <taxon>Murinae</taxon>
        <taxon>Mus</taxon>
        <taxon>Mus</taxon>
    </lineage>
</organism>
<gene>
    <name type="primary">Slc1a3</name>
    <name type="synonym">Eaat1</name>
    <name type="synonym">Gmt1</name>
</gene>
<reference key="1">
    <citation type="journal article" date="1993" name="Neurosci. Lett.">
        <title>Cloning and expression of a glutamate transporter from mouse brain.</title>
        <authorList>
            <person name="Tanaka K."/>
        </authorList>
    </citation>
    <scope>NUCLEOTIDE SEQUENCE [MRNA]</scope>
    <scope>FUNCTION</scope>
    <scope>SUBCELLULAR LOCATION</scope>
    <scope>TISSUE SPECIFICITY</scope>
    <source>
        <tissue>Brain</tissue>
    </source>
</reference>
<reference key="2">
    <citation type="journal article" date="2004" name="Genome Res.">
        <title>The status, quality, and expansion of the NIH full-length cDNA project: the Mammalian Gene Collection (MGC).</title>
        <authorList>
            <consortium name="The MGC Project Team"/>
        </authorList>
    </citation>
    <scope>NUCLEOTIDE SEQUENCE [LARGE SCALE MRNA]</scope>
    <source>
        <strain>C57BL/6J</strain>
        <tissue>Brain</tissue>
        <tissue>Neural stem cell</tissue>
    </source>
</reference>
<reference key="3">
    <citation type="submission" date="2007-04" db="UniProtKB">
        <authorList>
            <person name="Lubec G."/>
            <person name="Kang S.U."/>
        </authorList>
    </citation>
    <scope>PROTEIN SEQUENCE OF 80-114; 161-175; 189-196; 269-280 AND 480-499</scope>
    <scope>IDENTIFICATION BY MASS SPECTROMETRY</scope>
    <source>
        <strain>C57BL/6J</strain>
        <tissue>Brain</tissue>
    </source>
</reference>
<reference key="4">
    <citation type="journal article" date="2004" name="Brain Res. Mol. Brain Res.">
        <title>Functional analysis of glutamate transporters in excitatory synaptic transmission of GLAST1 and GLAST1/EAAC1 deficient mice.</title>
        <authorList>
            <person name="Stoffel W."/>
            <person name="Koerner R."/>
            <person name="Wachtmann D."/>
            <person name="Keller B.U."/>
        </authorList>
    </citation>
    <scope>DISRUPTION PHENOTYPE</scope>
    <scope>FUNCTION</scope>
    <scope>TISSUE SPECIFICITY</scope>
</reference>
<reference key="5">
    <citation type="journal article" date="2005" name="Glia">
        <title>Glutamate transport by retinal Muller cells in glutamate/aspartate transporter-knockout mice.</title>
        <authorList>
            <person name="Sarthy V.P."/>
            <person name="Pignataro L."/>
            <person name="Pannicke T."/>
            <person name="Weick M."/>
            <person name="Reichenbach A."/>
            <person name="Harada T."/>
            <person name="Tanaka K."/>
            <person name="Marc R."/>
        </authorList>
    </citation>
    <scope>DISRUPTION PHENOTYPE</scope>
    <scope>FUNCTION</scope>
</reference>
<reference key="6">
    <citation type="journal article" date="2006" name="Proc. Natl. Acad. Sci. U.S.A.">
        <title>Indispensability of the glutamate transporters GLAST and GLT1 to brain development.</title>
        <authorList>
            <person name="Matsugami T.R."/>
            <person name="Tanemura K."/>
            <person name="Mieda M."/>
            <person name="Nakatomi R."/>
            <person name="Yamada K."/>
            <person name="Kondo T."/>
            <person name="Ogawa M."/>
            <person name="Obata K."/>
            <person name="Watanabe M."/>
            <person name="Hashikawa T."/>
            <person name="Tanaka K."/>
        </authorList>
    </citation>
    <scope>DISRUPTION PHENOTYPE</scope>
    <scope>FUNCTION</scope>
</reference>
<reference key="7">
    <citation type="journal article" date="2007" name="Mol. Cell. Proteomics">
        <title>Qualitative and quantitative analyses of protein phosphorylation in naive and stimulated mouse synaptosomal preparations.</title>
        <authorList>
            <person name="Munton R.P."/>
            <person name="Tweedie-Cullen R."/>
            <person name="Livingstone-Zatchej M."/>
            <person name="Weinandy F."/>
            <person name="Waidelich M."/>
            <person name="Longo D."/>
            <person name="Gehrig P."/>
            <person name="Potthast F."/>
            <person name="Rutishauser D."/>
            <person name="Gerrits B."/>
            <person name="Panse C."/>
            <person name="Schlapbach R."/>
            <person name="Mansuy I.M."/>
        </authorList>
    </citation>
    <scope>IDENTIFICATION BY MASS SPECTROMETRY [LARGE SCALE ANALYSIS]</scope>
    <source>
        <tissue>Brain cortex</tissue>
    </source>
</reference>
<reference key="8">
    <citation type="journal article" date="2009" name="Mol. Cell. Proteomics">
        <title>The mouse C2C12 myoblast cell surface N-linked glycoproteome: identification, glycosite occupancy, and membrane orientation.</title>
        <authorList>
            <person name="Gundry R.L."/>
            <person name="Raginski K."/>
            <person name="Tarasova Y."/>
            <person name="Tchernyshyov I."/>
            <person name="Bausch-Fluck D."/>
            <person name="Elliott S.T."/>
            <person name="Boheler K.R."/>
            <person name="Van Eyk J.E."/>
            <person name="Wollscheid B."/>
        </authorList>
    </citation>
    <scope>GLYCOSYLATION [LARGE SCALE ANALYSIS] AT ASN-206 AND ASN-216</scope>
    <source>
        <tissue>Myoblast</tissue>
    </source>
</reference>
<reference key="9">
    <citation type="journal article" date="2010" name="Cell">
        <title>A tissue-specific atlas of mouse protein phosphorylation and expression.</title>
        <authorList>
            <person name="Huttlin E.L."/>
            <person name="Jedrychowski M.P."/>
            <person name="Elias J.E."/>
            <person name="Goswami T."/>
            <person name="Rad R."/>
            <person name="Beausoleil S.A."/>
            <person name="Villen J."/>
            <person name="Haas W."/>
            <person name="Sowa M.E."/>
            <person name="Gygi S.P."/>
        </authorList>
    </citation>
    <scope>PHOSPHORYLATION [LARGE SCALE ANALYSIS] AT SER-512</scope>
    <scope>IDENTIFICATION BY MASS SPECTROMETRY [LARGE SCALE ANALYSIS]</scope>
    <source>
        <tissue>Brain</tissue>
        <tissue>Brown adipose tissue</tissue>
        <tissue>Kidney</tissue>
        <tissue>Liver</tissue>
        <tissue>Lung</tissue>
    </source>
</reference>
<reference key="10">
    <citation type="journal article" date="2017" name="FEBS Lett.">
        <title>The amino acid transporter, SLC1A3, is plasma membrane-localised in adipocytes and its activity is insensitive to insulin.</title>
        <authorList>
            <person name="Krycer J.R."/>
            <person name="Fazakerley D.J."/>
            <person name="Cater R.J."/>
            <person name="C Thomas K."/>
            <person name="Naghiloo S."/>
            <person name="Burchfield J.G."/>
            <person name="Humphrey S.J."/>
            <person name="Vandenberg R.J."/>
            <person name="Ryan R.M."/>
            <person name="James D.E."/>
        </authorList>
    </citation>
    <scope>FUNCTION</scope>
    <scope>SUBCELLULAR LOCATION</scope>
</reference>
<sequence>MTKSNGEEPRMGGRMERLQQGVRKRTLLAKKKVQSLTKEDVKSYLFRNAFVLLTVTAVIVGTILGFALRPYKMSYREVKYFSFPGELLMRMLQMLVLPLIISSLVTGMAALDSKASGKMGMRAVVYYMTTTIIAVVIGIIIVIIIHPGKGTKENMYREGKIVQVTAADAFLDLIRNMFPPNLVEACFKQFKTSYEKRSFKVPIQSNETLLGAVINNVSEAMETLTRIREEMVPVPGSVNGVNALGLVVFSMCFGFVIGNMKEQGQALREFFDSLNEAIMRLVAVIMWYAPLGILFLIAGKIVEMEDMGVIGGQLAMYTVTVIVGLLIHAVIVLPLLYFLVTRKNPWVFIGGLLQALITALGTSSSSATLPITFKCLEENNGVDKRITRFVLPVGATINMDGTALYEALAAIFIAQVNNFDLNFGQIITISITATAASIGAAGIPQAGLVTMVIVLTSVGLPTDDITLIIAVDWFLDRLRTTTNVLGDSLGAGIVEHLSRHELKNRDVEMGNSVIEENEMKKPYQLIAQDNEPEKPVADSETKM</sequence>
<name>EAA1_MOUSE</name>
<protein>
    <recommendedName>
        <fullName>Excitatory amino acid transporter 1</fullName>
    </recommendedName>
    <alternativeName>
        <fullName>Glial high affinity glutamate transporter</fullName>
    </alternativeName>
    <alternativeName>
        <fullName>High-affinity neuronal glutamate transporter</fullName>
        <shortName evidence="12">GluT-1</shortName>
    </alternativeName>
    <alternativeName>
        <fullName>Sodium-dependent glutamate/aspartate transporter 1</fullName>
        <shortName>GLAST-1</shortName>
    </alternativeName>
    <alternativeName>
        <fullName>Solute carrier family 1 member 3</fullName>
    </alternativeName>
</protein>
<accession>P56564</accession>
<accession>Q99P53</accession>
<evidence type="ECO:0000250" key="1">
    <source>
        <dbReference type="UniProtKB" id="O57321"/>
    </source>
</evidence>
<evidence type="ECO:0000250" key="2">
    <source>
        <dbReference type="UniProtKB" id="O59010"/>
    </source>
</evidence>
<evidence type="ECO:0000250" key="3">
    <source>
        <dbReference type="UniProtKB" id="P43003"/>
    </source>
</evidence>
<evidence type="ECO:0000255" key="4"/>
<evidence type="ECO:0000256" key="5">
    <source>
        <dbReference type="SAM" id="MobiDB-lite"/>
    </source>
</evidence>
<evidence type="ECO:0000269" key="6">
    <source>
    </source>
</evidence>
<evidence type="ECO:0000269" key="7">
    <source>
    </source>
</evidence>
<evidence type="ECO:0000269" key="8">
    <source>
    </source>
</evidence>
<evidence type="ECO:0000269" key="9">
    <source>
    </source>
</evidence>
<evidence type="ECO:0000269" key="10">
    <source>
    </source>
</evidence>
<evidence type="ECO:0000269" key="11">
    <source>
    </source>
</evidence>
<evidence type="ECO:0000303" key="12">
    <source>
    </source>
</evidence>
<evidence type="ECO:0000305" key="13"/>
<evidence type="ECO:0007744" key="14">
    <source>
    </source>
</evidence>
<proteinExistence type="evidence at protein level"/>
<feature type="chain" id="PRO_0000202058" description="Excitatory amino acid transporter 1">
    <location>
        <begin position="1"/>
        <end position="543"/>
    </location>
</feature>
<feature type="topological domain" description="Cytoplasmic" evidence="3">
    <location>
        <begin position="1"/>
        <end position="47"/>
    </location>
</feature>
<feature type="transmembrane region" description="Helical; Name=1" evidence="3">
    <location>
        <begin position="48"/>
        <end position="68"/>
    </location>
</feature>
<feature type="topological domain" description="Extracellular" evidence="3">
    <location>
        <begin position="69"/>
        <end position="86"/>
    </location>
</feature>
<feature type="transmembrane region" description="Helical; Name=2" evidence="3">
    <location>
        <begin position="87"/>
        <end position="108"/>
    </location>
</feature>
<feature type="topological domain" description="Cytoplasmic" evidence="3">
    <location>
        <begin position="109"/>
        <end position="122"/>
    </location>
</feature>
<feature type="transmembrane region" description="Helical; Name=3" evidence="3">
    <location>
        <begin position="123"/>
        <end position="145"/>
    </location>
</feature>
<feature type="topological domain" description="Extracellular" evidence="3">
    <location>
        <begin position="146"/>
        <end position="236"/>
    </location>
</feature>
<feature type="transmembrane region" description="Helical; Name=4" evidence="3">
    <location>
        <begin position="237"/>
        <end position="260"/>
    </location>
</feature>
<feature type="topological domain" description="Cytoplasmic" evidence="3">
    <location>
        <begin position="261"/>
        <end position="269"/>
    </location>
</feature>
<feature type="transmembrane region" description="Helical; Name=5" evidence="3">
    <location>
        <begin position="270"/>
        <end position="297"/>
    </location>
</feature>
<feature type="topological domain" description="Extracellular" evidence="3">
    <location>
        <begin position="298"/>
        <end position="318"/>
    </location>
</feature>
<feature type="transmembrane region" description="Helical; Name=6" evidence="3">
    <location>
        <begin position="319"/>
        <end position="340"/>
    </location>
</feature>
<feature type="topological domain" description="Cytoplasmic" evidence="3">
    <location>
        <begin position="341"/>
        <end position="345"/>
    </location>
</feature>
<feature type="intramembrane region" description="Discontinuously helical" evidence="3">
    <location>
        <begin position="346"/>
        <end position="376"/>
    </location>
</feature>
<feature type="topological domain" description="Cytoplasmic" evidence="3">
    <location>
        <begin position="377"/>
        <end position="385"/>
    </location>
</feature>
<feature type="transmembrane region" description="Helical; Name=7" evidence="3">
    <location>
        <begin position="386"/>
        <end position="412"/>
    </location>
</feature>
<feature type="topological domain" description="Extracellular" evidence="3">
    <location>
        <begin position="413"/>
        <end position="425"/>
    </location>
</feature>
<feature type="intramembrane region" description="Discontinuously helical" evidence="3">
    <location>
        <begin position="426"/>
        <end position="459"/>
    </location>
</feature>
<feature type="topological domain" description="Extracellular" evidence="3">
    <location>
        <begin position="460"/>
        <end position="472"/>
    </location>
</feature>
<feature type="transmembrane region" description="Helical; Name=8" evidence="3">
    <location>
        <begin position="473"/>
        <end position="494"/>
    </location>
</feature>
<feature type="topological domain" description="Cytoplasmic" evidence="3">
    <location>
        <begin position="495"/>
        <end position="543"/>
    </location>
</feature>
<feature type="region of interest" description="Disordered" evidence="5">
    <location>
        <begin position="522"/>
        <end position="543"/>
    </location>
</feature>
<feature type="compositionally biased region" description="Basic and acidic residues" evidence="5">
    <location>
        <begin position="531"/>
        <end position="543"/>
    </location>
</feature>
<feature type="binding site" evidence="2">
    <location>
        <begin position="363"/>
        <end position="365"/>
    </location>
    <ligand>
        <name>L-aspartate</name>
        <dbReference type="ChEBI" id="CHEBI:29991"/>
    </ligand>
</feature>
<feature type="binding site" evidence="2">
    <location>
        <position position="394"/>
    </location>
    <ligand>
        <name>Na(+)</name>
        <dbReference type="ChEBI" id="CHEBI:29101"/>
        <label>1</label>
    </ligand>
</feature>
<feature type="binding site" evidence="2">
    <location>
        <position position="396"/>
    </location>
    <ligand>
        <name>Na(+)</name>
        <dbReference type="ChEBI" id="CHEBI:29101"/>
        <label>2</label>
    </ligand>
</feature>
<feature type="binding site" evidence="2">
    <location>
        <position position="398"/>
    </location>
    <ligand>
        <name>Na(+)</name>
        <dbReference type="ChEBI" id="CHEBI:29101"/>
        <label>1</label>
    </ligand>
</feature>
<feature type="binding site" evidence="2">
    <location>
        <position position="402"/>
    </location>
    <ligand>
        <name>L-aspartate</name>
        <dbReference type="ChEBI" id="CHEBI:29991"/>
    </ligand>
</feature>
<feature type="binding site" evidence="3">
    <location>
        <begin position="443"/>
        <end position="447"/>
    </location>
    <ligand>
        <name>L-aspartate</name>
        <dbReference type="ChEBI" id="CHEBI:29991"/>
    </ligand>
</feature>
<feature type="binding site" evidence="2">
    <location>
        <position position="476"/>
    </location>
    <ligand>
        <name>L-aspartate</name>
        <dbReference type="ChEBI" id="CHEBI:29991"/>
    </ligand>
</feature>
<feature type="binding site" evidence="2">
    <location>
        <position position="483"/>
    </location>
    <ligand>
        <name>L-aspartate</name>
        <dbReference type="ChEBI" id="CHEBI:29991"/>
    </ligand>
</feature>
<feature type="binding site" evidence="2">
    <location>
        <position position="483"/>
    </location>
    <ligand>
        <name>Na(+)</name>
        <dbReference type="ChEBI" id="CHEBI:29101"/>
        <label>1</label>
    </ligand>
</feature>
<feature type="binding site" evidence="2">
    <location>
        <position position="487"/>
    </location>
    <ligand>
        <name>Na(+)</name>
        <dbReference type="ChEBI" id="CHEBI:29101"/>
        <label>1</label>
    </ligand>
</feature>
<feature type="modified residue" description="Phosphoserine" evidence="14">
    <location>
        <position position="512"/>
    </location>
</feature>
<feature type="glycosylation site" description="N-linked (GlcNAc...) asparagine" evidence="9">
    <location>
        <position position="206"/>
    </location>
</feature>
<feature type="glycosylation site" description="N-linked (GlcNAc...) asparagine" evidence="9">
    <location>
        <position position="216"/>
    </location>
</feature>
<comment type="function">
    <text evidence="1 6 7 8 10 11">Sodium-dependent, high-affinity amino acid transporter that mediates the uptake of L-glutamate and also L-aspartate and D-aspartate (PubMed:28032905, PubMed:7903437). Functions as a symporter that transports one amino acid molecule together with two or three Na(+) ions and one proton, in parallel with the counter-transport of one K(+) ion (By similarity). Plays a redundant role in the rapid removal of released glutamate from the synaptic cleft, which is essential for terminating the postsynaptic action of glutamate (PubMed:15363892, PubMed:15390100, PubMed:16880397).</text>
</comment>
<comment type="catalytic activity">
    <reaction evidence="3">
        <text>K(+)(in) + L-glutamate(out) + 3 Na(+)(out) + H(+)(out) = K(+)(out) + L-glutamate(in) + 3 Na(+)(in) + H(+)(in)</text>
        <dbReference type="Rhea" id="RHEA:70699"/>
        <dbReference type="ChEBI" id="CHEBI:15378"/>
        <dbReference type="ChEBI" id="CHEBI:29101"/>
        <dbReference type="ChEBI" id="CHEBI:29103"/>
        <dbReference type="ChEBI" id="CHEBI:29985"/>
    </reaction>
</comment>
<comment type="catalytic activity">
    <reaction evidence="3">
        <text>K(+)(in) + L-aspartate(out) + 3 Na(+)(out) + H(+)(out) = K(+)(out) + L-aspartate(in) + 3 Na(+)(in) + H(+)(in)</text>
        <dbReference type="Rhea" id="RHEA:70851"/>
        <dbReference type="ChEBI" id="CHEBI:15378"/>
        <dbReference type="ChEBI" id="CHEBI:29101"/>
        <dbReference type="ChEBI" id="CHEBI:29103"/>
        <dbReference type="ChEBI" id="CHEBI:29991"/>
    </reaction>
</comment>
<comment type="catalytic activity">
    <reaction evidence="3">
        <text>D-aspartate(out) + K(+)(in) + 3 Na(+)(out) + H(+)(out) = D-aspartate(in) + K(+)(out) + 3 Na(+)(in) + H(+)(in)</text>
        <dbReference type="Rhea" id="RHEA:71379"/>
        <dbReference type="ChEBI" id="CHEBI:15378"/>
        <dbReference type="ChEBI" id="CHEBI:29101"/>
        <dbReference type="ChEBI" id="CHEBI:29103"/>
        <dbReference type="ChEBI" id="CHEBI:29990"/>
    </reaction>
</comment>
<comment type="subunit">
    <text evidence="3">Homotrimer (By similarity).</text>
</comment>
<comment type="subcellular location">
    <subcellularLocation>
        <location evidence="10 11">Cell membrane</location>
        <topology evidence="4">Multi-pass membrane protein</topology>
    </subcellularLocation>
</comment>
<comment type="tissue specificity">
    <text evidence="11">Detected in brain, in Bergmann glia arborising into the molecular layer of the cerebellum (at protein level) (PubMed:15363892). Localized in brain and is highly enriched in the Purkinje cell layer in cerebellum. Intermediate level in lung, low level in spleen, skeletal muscle and testis.</text>
</comment>
<comment type="domain">
    <text evidence="3">Contains eight transmembrane regions plus two helical hairpins that dip into the membrane. These helical hairpin structures play an important role in the transport process. The first enters the membrane from the cytoplasmic side, the second one from the extracellular side. During the transport cycle, the regions involved in amino acid transport, and especially the helical hairpins, move vertically by about 15-18 Angstroms, alternating between exposure to the aqueous phase and reinsertion in the lipid bilayer. In contrast, the regions involved in trimerization do not move.</text>
</comment>
<comment type="PTM">
    <text evidence="9">Glycosylated.</text>
</comment>
<comment type="disruption phenotype">
    <text evidence="6 7 8">No visible phenotype (PubMed:15363892, PubMed:15390100). Mutant mice display normal locomotion, motor coordination and learning, and globally normal glutamate uptake in brain vesicle preparations (PubMed:15363892). The decay time of glutamate receptor mediated excitatory postsynaptic currents (EPSCs) in cerebellar Purkinje is slightly increased (PubMed:15363892). The decreased rate of glutamate uptake in retina Mueller cells from mutant mice suggests that Slc1a3 accounts for about half of the glutamate uptake activity in wild-type cells (PubMed:15390100). Mice deficient in both Slc1a2 and Slc1a3 die at about 17 dpc (PubMed:16880397).</text>
</comment>
<comment type="similarity">
    <text evidence="13">Belongs to the dicarboxylate/amino acid:cation symporter (DAACS) (TC 2.A.23) family. SLC1A3 subfamily.</text>
</comment>
<dbReference type="EMBL" id="AF330257">
    <property type="protein sequence ID" value="AAK01708.1"/>
    <property type="molecule type" value="mRNA"/>
</dbReference>
<dbReference type="EMBL" id="BC058711">
    <property type="protein sequence ID" value="AAH58711.1"/>
    <property type="molecule type" value="mRNA"/>
</dbReference>
<dbReference type="EMBL" id="BC066154">
    <property type="protein sequence ID" value="AAH66154.1"/>
    <property type="molecule type" value="mRNA"/>
</dbReference>
<dbReference type="CCDS" id="CCDS27373.1"/>
<dbReference type="RefSeq" id="NP_683740.1">
    <property type="nucleotide sequence ID" value="NM_148938.3"/>
</dbReference>
<dbReference type="SMR" id="P56564"/>
<dbReference type="BioGRID" id="203291">
    <property type="interactions" value="15"/>
</dbReference>
<dbReference type="FunCoup" id="P56564">
    <property type="interactions" value="433"/>
</dbReference>
<dbReference type="IntAct" id="P56564">
    <property type="interactions" value="5"/>
</dbReference>
<dbReference type="MINT" id="P56564"/>
<dbReference type="STRING" id="10090.ENSMUSP00000005493"/>
<dbReference type="GlyCosmos" id="P56564">
    <property type="glycosylation" value="2 sites, No reported glycans"/>
</dbReference>
<dbReference type="GlyGen" id="P56564">
    <property type="glycosylation" value="3 sites, 2 N-linked glycans (2 sites), 1 O-linked glycan (1 site)"/>
</dbReference>
<dbReference type="iPTMnet" id="P56564"/>
<dbReference type="MetOSite" id="P56564"/>
<dbReference type="PhosphoSitePlus" id="P56564"/>
<dbReference type="SwissPalm" id="P56564"/>
<dbReference type="jPOST" id="P56564"/>
<dbReference type="PaxDb" id="10090-ENSMUSP00000005493"/>
<dbReference type="PeptideAtlas" id="P56564"/>
<dbReference type="ProteomicsDB" id="275425"/>
<dbReference type="Pumba" id="P56564"/>
<dbReference type="Antibodypedia" id="22936">
    <property type="antibodies" value="417 antibodies from 38 providers"/>
</dbReference>
<dbReference type="DNASU" id="20512"/>
<dbReference type="Ensembl" id="ENSMUST00000005493.14">
    <property type="protein sequence ID" value="ENSMUSP00000005493.8"/>
    <property type="gene ID" value="ENSMUSG00000005360.15"/>
</dbReference>
<dbReference type="GeneID" id="20512"/>
<dbReference type="KEGG" id="mmu:20512"/>
<dbReference type="UCSC" id="uc007vex.1">
    <property type="organism name" value="mouse"/>
</dbReference>
<dbReference type="AGR" id="MGI:99917"/>
<dbReference type="CTD" id="6507"/>
<dbReference type="MGI" id="MGI:99917">
    <property type="gene designation" value="Slc1a3"/>
</dbReference>
<dbReference type="VEuPathDB" id="HostDB:ENSMUSG00000005360"/>
<dbReference type="eggNOG" id="KOG3787">
    <property type="taxonomic scope" value="Eukaryota"/>
</dbReference>
<dbReference type="GeneTree" id="ENSGT00940000155464"/>
<dbReference type="HOGENOM" id="CLU_019375_3_2_1"/>
<dbReference type="InParanoid" id="P56564"/>
<dbReference type="OMA" id="VDWFMGI"/>
<dbReference type="OrthoDB" id="5877963at2759"/>
<dbReference type="PhylomeDB" id="P56564"/>
<dbReference type="TreeFam" id="TF315206"/>
<dbReference type="Reactome" id="R-MMU-210455">
    <property type="pathway name" value="Astrocytic Glutamate-Glutamine Uptake And Metabolism"/>
</dbReference>
<dbReference type="Reactome" id="R-MMU-210500">
    <property type="pathway name" value="Glutamate Neurotransmitter Release Cycle"/>
</dbReference>
<dbReference type="Reactome" id="R-MMU-425393">
    <property type="pathway name" value="Transport of inorganic cations/anions and amino acids/oligopeptides"/>
</dbReference>
<dbReference type="BioGRID-ORCS" id="20512">
    <property type="hits" value="1 hit in 78 CRISPR screens"/>
</dbReference>
<dbReference type="CD-CODE" id="CE726F99">
    <property type="entry name" value="Postsynaptic density"/>
</dbReference>
<dbReference type="ChiTaRS" id="Slc1a3">
    <property type="organism name" value="mouse"/>
</dbReference>
<dbReference type="PRO" id="PR:P56564"/>
<dbReference type="Proteomes" id="UP000000589">
    <property type="component" value="Chromosome 15"/>
</dbReference>
<dbReference type="RNAct" id="P56564">
    <property type="molecule type" value="protein"/>
</dbReference>
<dbReference type="Bgee" id="ENSMUSG00000005360">
    <property type="expression patterns" value="Expressed in cerebellum lobe and 261 other cell types or tissues"/>
</dbReference>
<dbReference type="ExpressionAtlas" id="P56564">
    <property type="expression patterns" value="baseline and differential"/>
</dbReference>
<dbReference type="GO" id="GO:0071944">
    <property type="term" value="C:cell periphery"/>
    <property type="evidence" value="ECO:0000314"/>
    <property type="project" value="MGI"/>
</dbReference>
<dbReference type="GO" id="GO:0042995">
    <property type="term" value="C:cell projection"/>
    <property type="evidence" value="ECO:0000314"/>
    <property type="project" value="MGI"/>
</dbReference>
<dbReference type="GO" id="GO:0009986">
    <property type="term" value="C:cell surface"/>
    <property type="evidence" value="ECO:0000314"/>
    <property type="project" value="MGI"/>
</dbReference>
<dbReference type="GO" id="GO:0043005">
    <property type="term" value="C:neuron projection"/>
    <property type="evidence" value="ECO:0000314"/>
    <property type="project" value="MGI"/>
</dbReference>
<dbReference type="GO" id="GO:0043025">
    <property type="term" value="C:neuronal cell body"/>
    <property type="evidence" value="ECO:0000314"/>
    <property type="project" value="MGI"/>
</dbReference>
<dbReference type="GO" id="GO:0005886">
    <property type="term" value="C:plasma membrane"/>
    <property type="evidence" value="ECO:0000314"/>
    <property type="project" value="UniProtKB"/>
</dbReference>
<dbReference type="GO" id="GO:0045202">
    <property type="term" value="C:synapse"/>
    <property type="evidence" value="ECO:0000314"/>
    <property type="project" value="MGI"/>
</dbReference>
<dbReference type="GO" id="GO:0015172">
    <property type="term" value="F:acidic amino acid transmembrane transporter activity"/>
    <property type="evidence" value="ECO:0000315"/>
    <property type="project" value="UniProtKB"/>
</dbReference>
<dbReference type="GO" id="GO:0016597">
    <property type="term" value="F:amino acid binding"/>
    <property type="evidence" value="ECO:0000314"/>
    <property type="project" value="MGI"/>
</dbReference>
<dbReference type="GO" id="GO:0016595">
    <property type="term" value="F:glutamate binding"/>
    <property type="evidence" value="ECO:0000314"/>
    <property type="project" value="MGI"/>
</dbReference>
<dbReference type="GO" id="GO:0015501">
    <property type="term" value="F:glutamate:sodium symporter activity"/>
    <property type="evidence" value="ECO:0000250"/>
    <property type="project" value="UniProtKB"/>
</dbReference>
<dbReference type="GO" id="GO:0005314">
    <property type="term" value="F:high-affinity L-glutamate transmembrane transporter activity"/>
    <property type="evidence" value="ECO:0000314"/>
    <property type="project" value="MGI"/>
</dbReference>
<dbReference type="GO" id="GO:0046872">
    <property type="term" value="F:metal ion binding"/>
    <property type="evidence" value="ECO:0007669"/>
    <property type="project" value="UniProtKB-KW"/>
</dbReference>
<dbReference type="GO" id="GO:0031223">
    <property type="term" value="P:auditory behavior"/>
    <property type="evidence" value="ECO:0000315"/>
    <property type="project" value="MGI"/>
</dbReference>
<dbReference type="GO" id="GO:0048667">
    <property type="term" value="P:cell morphogenesis involved in neuron differentiation"/>
    <property type="evidence" value="ECO:0000315"/>
    <property type="project" value="MGI"/>
</dbReference>
<dbReference type="GO" id="GO:0071314">
    <property type="term" value="P:cellular response to cocaine"/>
    <property type="evidence" value="ECO:0000314"/>
    <property type="project" value="MGI"/>
</dbReference>
<dbReference type="GO" id="GO:1902476">
    <property type="term" value="P:chloride transmembrane transport"/>
    <property type="evidence" value="ECO:0000250"/>
    <property type="project" value="UniProtKB"/>
</dbReference>
<dbReference type="GO" id="GO:0021545">
    <property type="term" value="P:cranial nerve development"/>
    <property type="evidence" value="ECO:0000315"/>
    <property type="project" value="MGI"/>
</dbReference>
<dbReference type="GO" id="GO:0070779">
    <property type="term" value="P:D-aspartate import across plasma membrane"/>
    <property type="evidence" value="ECO:0000315"/>
    <property type="project" value="UniProtKB"/>
</dbReference>
<dbReference type="GO" id="GO:0009449">
    <property type="term" value="P:gamma-aminobutyric acid biosynthetic process"/>
    <property type="evidence" value="ECO:0000315"/>
    <property type="project" value="MGI"/>
</dbReference>
<dbReference type="GO" id="GO:0006883">
    <property type="term" value="P:intracellular sodium ion homeostasis"/>
    <property type="evidence" value="ECO:0000315"/>
    <property type="project" value="MGI"/>
</dbReference>
<dbReference type="GO" id="GO:0140009">
    <property type="term" value="P:L-aspartate import across plasma membrane"/>
    <property type="evidence" value="ECO:0000250"/>
    <property type="project" value="UniProtKB"/>
</dbReference>
<dbReference type="GO" id="GO:0051938">
    <property type="term" value="P:L-glutamate import"/>
    <property type="evidence" value="ECO:0000315"/>
    <property type="project" value="MGI"/>
</dbReference>
<dbReference type="GO" id="GO:0098712">
    <property type="term" value="P:L-glutamate import across plasma membrane"/>
    <property type="evidence" value="ECO:0000315"/>
    <property type="project" value="MGI"/>
</dbReference>
<dbReference type="GO" id="GO:0015813">
    <property type="term" value="P:L-glutamate transmembrane transport"/>
    <property type="evidence" value="ECO:0000314"/>
    <property type="project" value="MGI"/>
</dbReference>
<dbReference type="GO" id="GO:0050885">
    <property type="term" value="P:neuromuscular process controlling balance"/>
    <property type="evidence" value="ECO:0000315"/>
    <property type="project" value="MGI"/>
</dbReference>
<dbReference type="GO" id="GO:0050806">
    <property type="term" value="P:positive regulation of synaptic transmission"/>
    <property type="evidence" value="ECO:0000315"/>
    <property type="project" value="MGI"/>
</dbReference>
<dbReference type="GO" id="GO:0071805">
    <property type="term" value="P:potassium ion transmembrane transport"/>
    <property type="evidence" value="ECO:0000250"/>
    <property type="project" value="UniProtKB"/>
</dbReference>
<dbReference type="GO" id="GO:0043200">
    <property type="term" value="P:response to amino acid"/>
    <property type="evidence" value="ECO:0000266"/>
    <property type="project" value="MGI"/>
</dbReference>
<dbReference type="GO" id="GO:0046677">
    <property type="term" value="P:response to antibiotic"/>
    <property type="evidence" value="ECO:0000315"/>
    <property type="project" value="MGI"/>
</dbReference>
<dbReference type="GO" id="GO:0009416">
    <property type="term" value="P:response to light stimulus"/>
    <property type="evidence" value="ECO:0000315"/>
    <property type="project" value="MGI"/>
</dbReference>
<dbReference type="GO" id="GO:0009611">
    <property type="term" value="P:response to wounding"/>
    <property type="evidence" value="ECO:0000315"/>
    <property type="project" value="MGI"/>
</dbReference>
<dbReference type="GO" id="GO:0009410">
    <property type="term" value="P:response to xenobiotic stimulus"/>
    <property type="evidence" value="ECO:0000315"/>
    <property type="project" value="MGI"/>
</dbReference>
<dbReference type="GO" id="GO:0007605">
    <property type="term" value="P:sensory perception of sound"/>
    <property type="evidence" value="ECO:0000315"/>
    <property type="project" value="MGI"/>
</dbReference>
<dbReference type="FunFam" id="1.10.3860.10:FF:000002">
    <property type="entry name" value="Amino acid transporter"/>
    <property type="match status" value="1"/>
</dbReference>
<dbReference type="Gene3D" id="1.10.3860.10">
    <property type="entry name" value="Sodium:dicarboxylate symporter"/>
    <property type="match status" value="1"/>
</dbReference>
<dbReference type="InterPro" id="IPR050746">
    <property type="entry name" value="DAACS"/>
</dbReference>
<dbReference type="InterPro" id="IPR001991">
    <property type="entry name" value="Na-dicarboxylate_symporter"/>
</dbReference>
<dbReference type="InterPro" id="IPR018107">
    <property type="entry name" value="Na-dicarboxylate_symporter_CS"/>
</dbReference>
<dbReference type="InterPro" id="IPR036458">
    <property type="entry name" value="Na:dicarbo_symporter_sf"/>
</dbReference>
<dbReference type="PANTHER" id="PTHR11958:SF24">
    <property type="entry name" value="EXCITATORY AMINO ACID TRANSPORTER 1"/>
    <property type="match status" value="1"/>
</dbReference>
<dbReference type="PANTHER" id="PTHR11958">
    <property type="entry name" value="SODIUM/DICARBOXYLATE SYMPORTER-RELATED"/>
    <property type="match status" value="1"/>
</dbReference>
<dbReference type="Pfam" id="PF00375">
    <property type="entry name" value="SDF"/>
    <property type="match status" value="1"/>
</dbReference>
<dbReference type="PRINTS" id="PR00173">
    <property type="entry name" value="EDTRNSPORT"/>
</dbReference>
<dbReference type="SUPFAM" id="SSF118215">
    <property type="entry name" value="Proton glutamate symport protein"/>
    <property type="match status" value="1"/>
</dbReference>
<dbReference type="PROSITE" id="PS00713">
    <property type="entry name" value="NA_DICARBOXYL_SYMP_1"/>
    <property type="match status" value="1"/>
</dbReference>
<dbReference type="PROSITE" id="PS00714">
    <property type="entry name" value="NA_DICARBOXYL_SYMP_2"/>
    <property type="match status" value="1"/>
</dbReference>
<keyword id="KW-0029">Amino-acid transport</keyword>
<keyword id="KW-1003">Cell membrane</keyword>
<keyword id="KW-0868">Chloride</keyword>
<keyword id="KW-0903">Direct protein sequencing</keyword>
<keyword id="KW-0325">Glycoprotein</keyword>
<keyword id="KW-0472">Membrane</keyword>
<keyword id="KW-0479">Metal-binding</keyword>
<keyword id="KW-0597">Phosphoprotein</keyword>
<keyword id="KW-0630">Potassium</keyword>
<keyword id="KW-1185">Reference proteome</keyword>
<keyword id="KW-0915">Sodium</keyword>
<keyword id="KW-0769">Symport</keyword>
<keyword id="KW-0812">Transmembrane</keyword>
<keyword id="KW-1133">Transmembrane helix</keyword>
<keyword id="KW-0813">Transport</keyword>